<keyword id="KW-0456">Lyase</keyword>
<keyword id="KW-1185">Reference proteome</keyword>
<accession>A5GMR6</accession>
<proteinExistence type="inferred from homology"/>
<dbReference type="EC" id="4.2.1.96" evidence="1"/>
<dbReference type="EMBL" id="CT971583">
    <property type="protein sequence ID" value="CAK24231.1"/>
    <property type="molecule type" value="Genomic_DNA"/>
</dbReference>
<dbReference type="SMR" id="A5GMR6"/>
<dbReference type="STRING" id="32051.SynWH7803_1805"/>
<dbReference type="KEGG" id="syx:SynWH7803_1805"/>
<dbReference type="eggNOG" id="COG2154">
    <property type="taxonomic scope" value="Bacteria"/>
</dbReference>
<dbReference type="HOGENOM" id="CLU_081974_3_2_3"/>
<dbReference type="OrthoDB" id="9794987at2"/>
<dbReference type="Proteomes" id="UP000001566">
    <property type="component" value="Chromosome"/>
</dbReference>
<dbReference type="GO" id="GO:0008124">
    <property type="term" value="F:4-alpha-hydroxytetrahydrobiopterin dehydratase activity"/>
    <property type="evidence" value="ECO:0007669"/>
    <property type="project" value="UniProtKB-UniRule"/>
</dbReference>
<dbReference type="GO" id="GO:0006729">
    <property type="term" value="P:tetrahydrobiopterin biosynthetic process"/>
    <property type="evidence" value="ECO:0007669"/>
    <property type="project" value="InterPro"/>
</dbReference>
<dbReference type="CDD" id="cd00914">
    <property type="entry name" value="PCD_DCoH_subfamily_b"/>
    <property type="match status" value="1"/>
</dbReference>
<dbReference type="Gene3D" id="3.30.1360.20">
    <property type="entry name" value="Transcriptional coactivator/pterin dehydratase"/>
    <property type="match status" value="1"/>
</dbReference>
<dbReference type="HAMAP" id="MF_00434">
    <property type="entry name" value="Pterin_4_alpha"/>
    <property type="match status" value="1"/>
</dbReference>
<dbReference type="InterPro" id="IPR036428">
    <property type="entry name" value="PCD_sf"/>
</dbReference>
<dbReference type="InterPro" id="IPR001533">
    <property type="entry name" value="Pterin_deHydtase"/>
</dbReference>
<dbReference type="NCBIfam" id="NF002017">
    <property type="entry name" value="PRK00823.1-2"/>
    <property type="match status" value="1"/>
</dbReference>
<dbReference type="NCBIfam" id="NF002018">
    <property type="entry name" value="PRK00823.1-3"/>
    <property type="match status" value="1"/>
</dbReference>
<dbReference type="PANTHER" id="PTHR12599">
    <property type="entry name" value="PTERIN-4-ALPHA-CARBINOLAMINE DEHYDRATASE"/>
    <property type="match status" value="1"/>
</dbReference>
<dbReference type="PANTHER" id="PTHR12599:SF0">
    <property type="entry name" value="PTERIN-4-ALPHA-CARBINOLAMINE DEHYDRATASE"/>
    <property type="match status" value="1"/>
</dbReference>
<dbReference type="Pfam" id="PF01329">
    <property type="entry name" value="Pterin_4a"/>
    <property type="match status" value="1"/>
</dbReference>
<dbReference type="SUPFAM" id="SSF55248">
    <property type="entry name" value="PCD-like"/>
    <property type="match status" value="1"/>
</dbReference>
<name>PHS_SYNPW</name>
<organism>
    <name type="scientific">Synechococcus sp. (strain WH7803)</name>
    <dbReference type="NCBI Taxonomy" id="32051"/>
    <lineage>
        <taxon>Bacteria</taxon>
        <taxon>Bacillati</taxon>
        <taxon>Cyanobacteriota</taxon>
        <taxon>Cyanophyceae</taxon>
        <taxon>Synechococcales</taxon>
        <taxon>Synechococcaceae</taxon>
        <taxon>Synechococcus</taxon>
    </lineage>
</organism>
<comment type="catalytic activity">
    <reaction evidence="1">
        <text>(4aS,6R)-4a-hydroxy-L-erythro-5,6,7,8-tetrahydrobiopterin = (6R)-L-erythro-6,7-dihydrobiopterin + H2O</text>
        <dbReference type="Rhea" id="RHEA:11920"/>
        <dbReference type="ChEBI" id="CHEBI:15377"/>
        <dbReference type="ChEBI" id="CHEBI:15642"/>
        <dbReference type="ChEBI" id="CHEBI:43120"/>
        <dbReference type="EC" id="4.2.1.96"/>
    </reaction>
</comment>
<comment type="similarity">
    <text evidence="1">Belongs to the pterin-4-alpha-carbinolamine dehydratase family.</text>
</comment>
<feature type="chain" id="PRO_1000050466" description="Putative pterin-4-alpha-carbinolamine dehydratase">
    <location>
        <begin position="1"/>
        <end position="93"/>
    </location>
</feature>
<evidence type="ECO:0000255" key="1">
    <source>
        <dbReference type="HAMAP-Rule" id="MF_00434"/>
    </source>
</evidence>
<sequence>MASLLPQSERETLSNTLPHWQVEAGRLKRNWQFKDFSEAFAFMTRVALLAEAMQHHPNWSNVYNRVSIELTTHDLGGLSDLDVQLARSIDALC</sequence>
<reference key="1">
    <citation type="submission" date="2006-05" db="EMBL/GenBank/DDBJ databases">
        <authorList>
            <consortium name="Genoscope"/>
        </authorList>
    </citation>
    <scope>NUCLEOTIDE SEQUENCE [LARGE SCALE GENOMIC DNA]</scope>
    <source>
        <strain>WH7803</strain>
    </source>
</reference>
<gene>
    <name type="ordered locus">SynWH7803_1805</name>
</gene>
<protein>
    <recommendedName>
        <fullName evidence="1">Putative pterin-4-alpha-carbinolamine dehydratase</fullName>
        <shortName evidence="1">PHS</shortName>
        <ecNumber evidence="1">4.2.1.96</ecNumber>
    </recommendedName>
    <alternativeName>
        <fullName evidence="1">4-alpha-hydroxy-tetrahydropterin dehydratase</fullName>
    </alternativeName>
    <alternativeName>
        <fullName evidence="1">Pterin carbinolamine dehydratase</fullName>
        <shortName evidence="1">PCD</shortName>
    </alternativeName>
</protein>